<feature type="chain" id="PRO_0000168007" description="Small ribosomal subunit protein bS20">
    <location>
        <begin position="1"/>
        <end position="86"/>
    </location>
</feature>
<feature type="region of interest" description="Disordered" evidence="2">
    <location>
        <begin position="1"/>
        <end position="26"/>
    </location>
</feature>
<dbReference type="EMBL" id="CR378664">
    <property type="protein sequence ID" value="CAG19010.1"/>
    <property type="status" value="ALT_INIT"/>
    <property type="molecule type" value="Genomic_DNA"/>
</dbReference>
<dbReference type="RefSeq" id="WP_041393882.1">
    <property type="nucleotide sequence ID" value="NC_006370.1"/>
</dbReference>
<dbReference type="SMR" id="Q6LUL5"/>
<dbReference type="STRING" id="298386.PBPRA0587"/>
<dbReference type="KEGG" id="ppr:PBPRA0587"/>
<dbReference type="eggNOG" id="COG0268">
    <property type="taxonomic scope" value="Bacteria"/>
</dbReference>
<dbReference type="HOGENOM" id="CLU_160655_4_0_6"/>
<dbReference type="Proteomes" id="UP000000593">
    <property type="component" value="Chromosome 1"/>
</dbReference>
<dbReference type="GO" id="GO:0005829">
    <property type="term" value="C:cytosol"/>
    <property type="evidence" value="ECO:0007669"/>
    <property type="project" value="TreeGrafter"/>
</dbReference>
<dbReference type="GO" id="GO:0015935">
    <property type="term" value="C:small ribosomal subunit"/>
    <property type="evidence" value="ECO:0007669"/>
    <property type="project" value="TreeGrafter"/>
</dbReference>
<dbReference type="GO" id="GO:0070181">
    <property type="term" value="F:small ribosomal subunit rRNA binding"/>
    <property type="evidence" value="ECO:0007669"/>
    <property type="project" value="TreeGrafter"/>
</dbReference>
<dbReference type="GO" id="GO:0003735">
    <property type="term" value="F:structural constituent of ribosome"/>
    <property type="evidence" value="ECO:0007669"/>
    <property type="project" value="InterPro"/>
</dbReference>
<dbReference type="GO" id="GO:0006412">
    <property type="term" value="P:translation"/>
    <property type="evidence" value="ECO:0007669"/>
    <property type="project" value="UniProtKB-UniRule"/>
</dbReference>
<dbReference type="FunFam" id="1.20.58.110:FF:000001">
    <property type="entry name" value="30S ribosomal protein S20"/>
    <property type="match status" value="1"/>
</dbReference>
<dbReference type="Gene3D" id="1.20.58.110">
    <property type="entry name" value="Ribosomal protein S20"/>
    <property type="match status" value="1"/>
</dbReference>
<dbReference type="HAMAP" id="MF_00500">
    <property type="entry name" value="Ribosomal_bS20"/>
    <property type="match status" value="1"/>
</dbReference>
<dbReference type="InterPro" id="IPR002583">
    <property type="entry name" value="Ribosomal_bS20"/>
</dbReference>
<dbReference type="InterPro" id="IPR036510">
    <property type="entry name" value="Ribosomal_bS20_sf"/>
</dbReference>
<dbReference type="NCBIfam" id="TIGR00029">
    <property type="entry name" value="S20"/>
    <property type="match status" value="1"/>
</dbReference>
<dbReference type="PANTHER" id="PTHR33398">
    <property type="entry name" value="30S RIBOSOMAL PROTEIN S20"/>
    <property type="match status" value="1"/>
</dbReference>
<dbReference type="PANTHER" id="PTHR33398:SF1">
    <property type="entry name" value="SMALL RIBOSOMAL SUBUNIT PROTEIN BS20C"/>
    <property type="match status" value="1"/>
</dbReference>
<dbReference type="Pfam" id="PF01649">
    <property type="entry name" value="Ribosomal_S20p"/>
    <property type="match status" value="1"/>
</dbReference>
<dbReference type="SUPFAM" id="SSF46992">
    <property type="entry name" value="Ribosomal protein S20"/>
    <property type="match status" value="1"/>
</dbReference>
<accession>Q6LUL5</accession>
<comment type="function">
    <text evidence="1">Binds directly to 16S ribosomal RNA.</text>
</comment>
<comment type="similarity">
    <text evidence="1">Belongs to the bacterial ribosomal protein bS20 family.</text>
</comment>
<comment type="sequence caution" evidence="3">
    <conflict type="erroneous initiation">
        <sequence resource="EMBL-CDS" id="CAG19010"/>
    </conflict>
</comment>
<keyword id="KW-1185">Reference proteome</keyword>
<keyword id="KW-0687">Ribonucleoprotein</keyword>
<keyword id="KW-0689">Ribosomal protein</keyword>
<keyword id="KW-0694">RNA-binding</keyword>
<keyword id="KW-0699">rRNA-binding</keyword>
<name>RS20_PHOPR</name>
<reference key="1">
    <citation type="journal article" date="2005" name="Science">
        <title>Life at depth: Photobacterium profundum genome sequence and expression analysis.</title>
        <authorList>
            <person name="Vezzi A."/>
            <person name="Campanaro S."/>
            <person name="D'Angelo M."/>
            <person name="Simonato F."/>
            <person name="Vitulo N."/>
            <person name="Lauro F.M."/>
            <person name="Cestaro A."/>
            <person name="Malacrida G."/>
            <person name="Simionati B."/>
            <person name="Cannata N."/>
            <person name="Romualdi C."/>
            <person name="Bartlett D.H."/>
            <person name="Valle G."/>
        </authorList>
    </citation>
    <scope>NUCLEOTIDE SEQUENCE [LARGE SCALE GENOMIC DNA]</scope>
    <source>
        <strain>ATCC BAA-1253 / SS9</strain>
    </source>
</reference>
<sequence length="86" mass="9710">MANIKSAKKRAITSEKRRQHNASRRSMMRTFFKKVIAAIEAGEKENATKAFADMQPVLDRMATKGLIHKNKAARQKARLTAKIKAL</sequence>
<evidence type="ECO:0000255" key="1">
    <source>
        <dbReference type="HAMAP-Rule" id="MF_00500"/>
    </source>
</evidence>
<evidence type="ECO:0000256" key="2">
    <source>
        <dbReference type="SAM" id="MobiDB-lite"/>
    </source>
</evidence>
<evidence type="ECO:0000305" key="3"/>
<gene>
    <name evidence="1" type="primary">rpsT</name>
    <name type="ordered locus">PBPRA0587</name>
</gene>
<organism>
    <name type="scientific">Photobacterium profundum (strain SS9)</name>
    <dbReference type="NCBI Taxonomy" id="298386"/>
    <lineage>
        <taxon>Bacteria</taxon>
        <taxon>Pseudomonadati</taxon>
        <taxon>Pseudomonadota</taxon>
        <taxon>Gammaproteobacteria</taxon>
        <taxon>Vibrionales</taxon>
        <taxon>Vibrionaceae</taxon>
        <taxon>Photobacterium</taxon>
    </lineage>
</organism>
<proteinExistence type="inferred from homology"/>
<protein>
    <recommendedName>
        <fullName evidence="1">Small ribosomal subunit protein bS20</fullName>
    </recommendedName>
    <alternativeName>
        <fullName evidence="3">30S ribosomal protein S20</fullName>
    </alternativeName>
</protein>